<proteinExistence type="inferred from homology"/>
<protein>
    <recommendedName>
        <fullName evidence="1">Large ribosomal subunit protein eL14</fullName>
    </recommendedName>
    <alternativeName>
        <fullName evidence="2">50S ribosomal protein L14e</fullName>
    </alternativeName>
</protein>
<organism>
    <name type="scientific">Thermococcus gammatolerans (strain DSM 15229 / JCM 11827 / EJ3)</name>
    <dbReference type="NCBI Taxonomy" id="593117"/>
    <lineage>
        <taxon>Archaea</taxon>
        <taxon>Methanobacteriati</taxon>
        <taxon>Methanobacteriota</taxon>
        <taxon>Thermococci</taxon>
        <taxon>Thermococcales</taxon>
        <taxon>Thermococcaceae</taxon>
        <taxon>Thermococcus</taxon>
    </lineage>
</organism>
<reference key="1">
    <citation type="journal article" date="2007" name="Genome Biol.">
        <title>Genome analysis and genome-wide proteomics of Thermococcus gammatolerans, the most radioresistant organism known amongst the Archaea.</title>
        <authorList>
            <person name="Zivanovic Y."/>
            <person name="Armengaud J."/>
            <person name="Lagorce A."/>
            <person name="Leplat C."/>
            <person name="Guerin P."/>
            <person name="Dutertre M."/>
            <person name="Anthouard V."/>
            <person name="Forterre P."/>
            <person name="Wincker P."/>
            <person name="Confalonieri F."/>
        </authorList>
    </citation>
    <scope>NUCLEOTIDE SEQUENCE [LARGE SCALE GENOMIC DNA]</scope>
    <source>
        <strain>DSM 15229 / JCM 11827 / EJ3</strain>
    </source>
</reference>
<gene>
    <name evidence="1" type="primary">rpl14e</name>
    <name type="ordered locus">TGAM_1974</name>
</gene>
<accession>C5A257</accession>
<evidence type="ECO:0000255" key="1">
    <source>
        <dbReference type="HAMAP-Rule" id="MF_00721"/>
    </source>
</evidence>
<evidence type="ECO:0000305" key="2"/>
<keyword id="KW-1185">Reference proteome</keyword>
<keyword id="KW-0687">Ribonucleoprotein</keyword>
<keyword id="KW-0689">Ribosomal protein</keyword>
<sequence>MPAIEVGRIAVVIAGRRAGQKVVVADIIDKNFVLVTGAGLNKVKRRRMNVKHLEPLPERVNIERGASDEEIKKALEEAGISLE</sequence>
<feature type="chain" id="PRO_1000212711" description="Large ribosomal subunit protein eL14">
    <location>
        <begin position="1"/>
        <end position="83"/>
    </location>
</feature>
<dbReference type="EMBL" id="CP001398">
    <property type="protein sequence ID" value="ACS34476.1"/>
    <property type="molecule type" value="Genomic_DNA"/>
</dbReference>
<dbReference type="RefSeq" id="WP_015859580.1">
    <property type="nucleotide sequence ID" value="NC_012804.1"/>
</dbReference>
<dbReference type="SMR" id="C5A257"/>
<dbReference type="STRING" id="593117.TGAM_1974"/>
<dbReference type="PaxDb" id="593117-TGAM_1974"/>
<dbReference type="GeneID" id="7987031"/>
<dbReference type="KEGG" id="tga:TGAM_1974"/>
<dbReference type="PATRIC" id="fig|593117.10.peg.1984"/>
<dbReference type="eggNOG" id="arCOG04167">
    <property type="taxonomic scope" value="Archaea"/>
</dbReference>
<dbReference type="HOGENOM" id="CLU_183474_0_0_2"/>
<dbReference type="OrthoDB" id="63594at2157"/>
<dbReference type="Proteomes" id="UP000001488">
    <property type="component" value="Chromosome"/>
</dbReference>
<dbReference type="GO" id="GO:0022625">
    <property type="term" value="C:cytosolic large ribosomal subunit"/>
    <property type="evidence" value="ECO:0007669"/>
    <property type="project" value="TreeGrafter"/>
</dbReference>
<dbReference type="GO" id="GO:0003723">
    <property type="term" value="F:RNA binding"/>
    <property type="evidence" value="ECO:0007669"/>
    <property type="project" value="InterPro"/>
</dbReference>
<dbReference type="GO" id="GO:0003735">
    <property type="term" value="F:structural constituent of ribosome"/>
    <property type="evidence" value="ECO:0007669"/>
    <property type="project" value="InterPro"/>
</dbReference>
<dbReference type="GO" id="GO:0042273">
    <property type="term" value="P:ribosomal large subunit biogenesis"/>
    <property type="evidence" value="ECO:0007669"/>
    <property type="project" value="TreeGrafter"/>
</dbReference>
<dbReference type="GO" id="GO:0006412">
    <property type="term" value="P:translation"/>
    <property type="evidence" value="ECO:0007669"/>
    <property type="project" value="UniProtKB-UniRule"/>
</dbReference>
<dbReference type="CDD" id="cd06088">
    <property type="entry name" value="KOW_RPL14"/>
    <property type="match status" value="1"/>
</dbReference>
<dbReference type="FunFam" id="2.30.30.30:FF:000045">
    <property type="entry name" value="50S ribosomal protein L14e"/>
    <property type="match status" value="1"/>
</dbReference>
<dbReference type="Gene3D" id="2.30.30.30">
    <property type="match status" value="1"/>
</dbReference>
<dbReference type="HAMAP" id="MF_00721">
    <property type="entry name" value="Ribosomal_eL14"/>
    <property type="match status" value="1"/>
</dbReference>
<dbReference type="InterPro" id="IPR014722">
    <property type="entry name" value="Rib_uL2_dom2"/>
</dbReference>
<dbReference type="InterPro" id="IPR039660">
    <property type="entry name" value="Ribosomal_eL14"/>
</dbReference>
<dbReference type="InterPro" id="IPR023651">
    <property type="entry name" value="Ribosomal_eL14_arc"/>
</dbReference>
<dbReference type="InterPro" id="IPR041985">
    <property type="entry name" value="Ribosomal_eL14_KOW"/>
</dbReference>
<dbReference type="InterPro" id="IPR008991">
    <property type="entry name" value="Translation_prot_SH3-like_sf"/>
</dbReference>
<dbReference type="NCBIfam" id="NF003320">
    <property type="entry name" value="PRK04333.1"/>
    <property type="match status" value="1"/>
</dbReference>
<dbReference type="PANTHER" id="PTHR11127">
    <property type="entry name" value="60S RIBOSOMAL PROTEIN L14"/>
    <property type="match status" value="1"/>
</dbReference>
<dbReference type="PANTHER" id="PTHR11127:SF2">
    <property type="entry name" value="LARGE RIBOSOMAL SUBUNIT PROTEIN EL14"/>
    <property type="match status" value="1"/>
</dbReference>
<dbReference type="SUPFAM" id="SSF50104">
    <property type="entry name" value="Translation proteins SH3-like domain"/>
    <property type="match status" value="1"/>
</dbReference>
<comment type="similarity">
    <text evidence="1">Belongs to the eukaryotic ribosomal protein eL14 family.</text>
</comment>
<name>RL14E_THEGJ</name>